<gene>
    <name evidence="6 8" type="primary">PCID2</name>
    <name evidence="8" type="ORF">CG7351</name>
</gene>
<organism>
    <name type="scientific">Drosophila melanogaster</name>
    <name type="common">Fruit fly</name>
    <dbReference type="NCBI Taxonomy" id="7227"/>
    <lineage>
        <taxon>Eukaryota</taxon>
        <taxon>Metazoa</taxon>
        <taxon>Ecdysozoa</taxon>
        <taxon>Arthropoda</taxon>
        <taxon>Hexapoda</taxon>
        <taxon>Insecta</taxon>
        <taxon>Pterygota</taxon>
        <taxon>Neoptera</taxon>
        <taxon>Endopterygota</taxon>
        <taxon>Diptera</taxon>
        <taxon>Brachycera</taxon>
        <taxon>Muscomorpha</taxon>
        <taxon>Ephydroidea</taxon>
        <taxon>Drosophilidae</taxon>
        <taxon>Drosophila</taxon>
        <taxon>Sophophora</taxon>
    </lineage>
</organism>
<feature type="chain" id="PRO_0000121035" description="PCI domain-containing protein 2 homolog">
    <location>
        <begin position="1"/>
        <end position="395"/>
    </location>
</feature>
<feature type="domain" description="PCI" evidence="1">
    <location>
        <begin position="208"/>
        <end position="389"/>
    </location>
</feature>
<keyword id="KW-0963">Cytoplasm</keyword>
<keyword id="KW-0206">Cytoskeleton</keyword>
<keyword id="KW-0472">Membrane</keyword>
<keyword id="KW-0509">mRNA transport</keyword>
<keyword id="KW-0539">Nucleus</keyword>
<keyword id="KW-0653">Protein transport</keyword>
<keyword id="KW-1185">Reference proteome</keyword>
<keyword id="KW-0810">Translation regulation</keyword>
<keyword id="KW-0813">Transport</keyword>
<keyword id="KW-0832">Ubl conjugation</keyword>
<evidence type="ECO:0000255" key="1">
    <source>
        <dbReference type="PROSITE-ProRule" id="PRU01185"/>
    </source>
</evidence>
<evidence type="ECO:0000269" key="2">
    <source>
    </source>
</evidence>
<evidence type="ECO:0000269" key="3">
    <source>
    </source>
</evidence>
<evidence type="ECO:0000269" key="4">
    <source>
    </source>
</evidence>
<evidence type="ECO:0000269" key="5">
    <source>
    </source>
</evidence>
<evidence type="ECO:0000303" key="6">
    <source>
    </source>
</evidence>
<evidence type="ECO:0000305" key="7"/>
<evidence type="ECO:0000312" key="8">
    <source>
        <dbReference type="FlyBase" id="FBgn0036184"/>
    </source>
</evidence>
<proteinExistence type="evidence at protein level"/>
<protein>
    <recommendedName>
        <fullName evidence="6">PCI domain-containing protein 2 homolog</fullName>
    </recommendedName>
    <alternativeName>
        <fullName>CSN12-like protein</fullName>
    </alternativeName>
</protein>
<reference key="1">
    <citation type="journal article" date="2000" name="Science">
        <title>The genome sequence of Drosophila melanogaster.</title>
        <authorList>
            <person name="Adams M.D."/>
            <person name="Celniker S.E."/>
            <person name="Holt R.A."/>
            <person name="Evans C.A."/>
            <person name="Gocayne J.D."/>
            <person name="Amanatides P.G."/>
            <person name="Scherer S.E."/>
            <person name="Li P.W."/>
            <person name="Hoskins R.A."/>
            <person name="Galle R.F."/>
            <person name="George R.A."/>
            <person name="Lewis S.E."/>
            <person name="Richards S."/>
            <person name="Ashburner M."/>
            <person name="Henderson S.N."/>
            <person name="Sutton G.G."/>
            <person name="Wortman J.R."/>
            <person name="Yandell M.D."/>
            <person name="Zhang Q."/>
            <person name="Chen L.X."/>
            <person name="Brandon R.C."/>
            <person name="Rogers Y.-H.C."/>
            <person name="Blazej R.G."/>
            <person name="Champe M."/>
            <person name="Pfeiffer B.D."/>
            <person name="Wan K.H."/>
            <person name="Doyle C."/>
            <person name="Baxter E.G."/>
            <person name="Helt G."/>
            <person name="Nelson C.R."/>
            <person name="Miklos G.L.G."/>
            <person name="Abril J.F."/>
            <person name="Agbayani A."/>
            <person name="An H.-J."/>
            <person name="Andrews-Pfannkoch C."/>
            <person name="Baldwin D."/>
            <person name="Ballew R.M."/>
            <person name="Basu A."/>
            <person name="Baxendale J."/>
            <person name="Bayraktaroglu L."/>
            <person name="Beasley E.M."/>
            <person name="Beeson K.Y."/>
            <person name="Benos P.V."/>
            <person name="Berman B.P."/>
            <person name="Bhandari D."/>
            <person name="Bolshakov S."/>
            <person name="Borkova D."/>
            <person name="Botchan M.R."/>
            <person name="Bouck J."/>
            <person name="Brokstein P."/>
            <person name="Brottier P."/>
            <person name="Burtis K.C."/>
            <person name="Busam D.A."/>
            <person name="Butler H."/>
            <person name="Cadieu E."/>
            <person name="Center A."/>
            <person name="Chandra I."/>
            <person name="Cherry J.M."/>
            <person name="Cawley S."/>
            <person name="Dahlke C."/>
            <person name="Davenport L.B."/>
            <person name="Davies P."/>
            <person name="de Pablos B."/>
            <person name="Delcher A."/>
            <person name="Deng Z."/>
            <person name="Mays A.D."/>
            <person name="Dew I."/>
            <person name="Dietz S.M."/>
            <person name="Dodson K."/>
            <person name="Doup L.E."/>
            <person name="Downes M."/>
            <person name="Dugan-Rocha S."/>
            <person name="Dunkov B.C."/>
            <person name="Dunn P."/>
            <person name="Durbin K.J."/>
            <person name="Evangelista C.C."/>
            <person name="Ferraz C."/>
            <person name="Ferriera S."/>
            <person name="Fleischmann W."/>
            <person name="Fosler C."/>
            <person name="Gabrielian A.E."/>
            <person name="Garg N.S."/>
            <person name="Gelbart W.M."/>
            <person name="Glasser K."/>
            <person name="Glodek A."/>
            <person name="Gong F."/>
            <person name="Gorrell J.H."/>
            <person name="Gu Z."/>
            <person name="Guan P."/>
            <person name="Harris M."/>
            <person name="Harris N.L."/>
            <person name="Harvey D.A."/>
            <person name="Heiman T.J."/>
            <person name="Hernandez J.R."/>
            <person name="Houck J."/>
            <person name="Hostin D."/>
            <person name="Houston K.A."/>
            <person name="Howland T.J."/>
            <person name="Wei M.-H."/>
            <person name="Ibegwam C."/>
            <person name="Jalali M."/>
            <person name="Kalush F."/>
            <person name="Karpen G.H."/>
            <person name="Ke Z."/>
            <person name="Kennison J.A."/>
            <person name="Ketchum K.A."/>
            <person name="Kimmel B.E."/>
            <person name="Kodira C.D."/>
            <person name="Kraft C.L."/>
            <person name="Kravitz S."/>
            <person name="Kulp D."/>
            <person name="Lai Z."/>
            <person name="Lasko P."/>
            <person name="Lei Y."/>
            <person name="Levitsky A.A."/>
            <person name="Li J.H."/>
            <person name="Li Z."/>
            <person name="Liang Y."/>
            <person name="Lin X."/>
            <person name="Liu X."/>
            <person name="Mattei B."/>
            <person name="McIntosh T.C."/>
            <person name="McLeod M.P."/>
            <person name="McPherson D."/>
            <person name="Merkulov G."/>
            <person name="Milshina N.V."/>
            <person name="Mobarry C."/>
            <person name="Morris J."/>
            <person name="Moshrefi A."/>
            <person name="Mount S.M."/>
            <person name="Moy M."/>
            <person name="Murphy B."/>
            <person name="Murphy L."/>
            <person name="Muzny D.M."/>
            <person name="Nelson D.L."/>
            <person name="Nelson D.R."/>
            <person name="Nelson K.A."/>
            <person name="Nixon K."/>
            <person name="Nusskern D.R."/>
            <person name="Pacleb J.M."/>
            <person name="Palazzolo M."/>
            <person name="Pittman G.S."/>
            <person name="Pan S."/>
            <person name="Pollard J."/>
            <person name="Puri V."/>
            <person name="Reese M.G."/>
            <person name="Reinert K."/>
            <person name="Remington K."/>
            <person name="Saunders R.D.C."/>
            <person name="Scheeler F."/>
            <person name="Shen H."/>
            <person name="Shue B.C."/>
            <person name="Siden-Kiamos I."/>
            <person name="Simpson M."/>
            <person name="Skupski M.P."/>
            <person name="Smith T.J."/>
            <person name="Spier E."/>
            <person name="Spradling A.C."/>
            <person name="Stapleton M."/>
            <person name="Strong R."/>
            <person name="Sun E."/>
            <person name="Svirskas R."/>
            <person name="Tector C."/>
            <person name="Turner R."/>
            <person name="Venter E."/>
            <person name="Wang A.H."/>
            <person name="Wang X."/>
            <person name="Wang Z.-Y."/>
            <person name="Wassarman D.A."/>
            <person name="Weinstock G.M."/>
            <person name="Weissenbach J."/>
            <person name="Williams S.M."/>
            <person name="Woodage T."/>
            <person name="Worley K.C."/>
            <person name="Wu D."/>
            <person name="Yang S."/>
            <person name="Yao Q.A."/>
            <person name="Ye J."/>
            <person name="Yeh R.-F."/>
            <person name="Zaveri J.S."/>
            <person name="Zhan M."/>
            <person name="Zhang G."/>
            <person name="Zhao Q."/>
            <person name="Zheng L."/>
            <person name="Zheng X.H."/>
            <person name="Zhong F.N."/>
            <person name="Zhong W."/>
            <person name="Zhou X."/>
            <person name="Zhu S.C."/>
            <person name="Zhu X."/>
            <person name="Smith H.O."/>
            <person name="Gibbs R.A."/>
            <person name="Myers E.W."/>
            <person name="Rubin G.M."/>
            <person name="Venter J.C."/>
        </authorList>
    </citation>
    <scope>NUCLEOTIDE SEQUENCE [LARGE SCALE GENOMIC DNA]</scope>
    <source>
        <strain>Berkeley</strain>
    </source>
</reference>
<reference key="2">
    <citation type="journal article" date="2002" name="Genome Biol.">
        <title>Annotation of the Drosophila melanogaster euchromatic genome: a systematic review.</title>
        <authorList>
            <person name="Misra S."/>
            <person name="Crosby M.A."/>
            <person name="Mungall C.J."/>
            <person name="Matthews B.B."/>
            <person name="Campbell K.S."/>
            <person name="Hradecky P."/>
            <person name="Huang Y."/>
            <person name="Kaminker J.S."/>
            <person name="Millburn G.H."/>
            <person name="Prochnik S.E."/>
            <person name="Smith C.D."/>
            <person name="Tupy J.L."/>
            <person name="Whitfield E.J."/>
            <person name="Bayraktaroglu L."/>
            <person name="Berman B.P."/>
            <person name="Bettencourt B.R."/>
            <person name="Celniker S.E."/>
            <person name="de Grey A.D.N.J."/>
            <person name="Drysdale R.A."/>
            <person name="Harris N.L."/>
            <person name="Richter J."/>
            <person name="Russo S."/>
            <person name="Schroeder A.J."/>
            <person name="Shu S.Q."/>
            <person name="Stapleton M."/>
            <person name="Yamada C."/>
            <person name="Ashburner M."/>
            <person name="Gelbart W.M."/>
            <person name="Rubin G.M."/>
            <person name="Lewis S.E."/>
        </authorList>
    </citation>
    <scope>GENOME REANNOTATION</scope>
    <source>
        <strain>Berkeley</strain>
    </source>
</reference>
<reference key="3">
    <citation type="journal article" date="2002" name="Genome Biol.">
        <title>A Drosophila full-length cDNA resource.</title>
        <authorList>
            <person name="Stapleton M."/>
            <person name="Carlson J.W."/>
            <person name="Brokstein P."/>
            <person name="Yu C."/>
            <person name="Champe M."/>
            <person name="George R.A."/>
            <person name="Guarin H."/>
            <person name="Kronmiller B."/>
            <person name="Pacleb J.M."/>
            <person name="Park S."/>
            <person name="Wan K.H."/>
            <person name="Rubin G.M."/>
            <person name="Celniker S.E."/>
        </authorList>
    </citation>
    <scope>NUCLEOTIDE SEQUENCE [LARGE SCALE MRNA]</scope>
    <source>
        <strain>Berkeley</strain>
        <tissue>Embryo</tissue>
    </source>
</reference>
<reference key="4">
    <citation type="journal article" date="2008" name="Genes Dev.">
        <title>Definition of global and transcript-specific mRNA export pathways in metazoans.</title>
        <authorList>
            <person name="Farny N.G."/>
            <person name="Hurt J.A."/>
            <person name="Silver P.A."/>
        </authorList>
    </citation>
    <scope>FUNCTION</scope>
    <scope>INTERACTION WITH SBR</scope>
    <scope>SUBCELLULAR LOCATION</scope>
    <scope>DOMAIN</scope>
</reference>
<reference key="5">
    <citation type="journal article" date="2016" name="Nucleic Acids Res.">
        <title>ORC interacts with THSC/TREX-2 and its subunits promote Nxf1 association with mRNP and mRNA export in Drosophila.</title>
        <authorList>
            <person name="Kopytova D."/>
            <person name="Popova V."/>
            <person name="Kurshakova M."/>
            <person name="Shidlovskii Y."/>
            <person name="Nabirochkina E."/>
            <person name="Brechalov A."/>
            <person name="Georgiev G."/>
            <person name="Georgieva S."/>
        </authorList>
    </citation>
    <scope>FUNCTION</scope>
    <scope>IDENTIFICATION IN THE AMEX COMPLEX</scope>
    <scope>INTERACTION WITH ORC3 AND ORC4</scope>
    <scope>SUBCELLULAR LOCATION</scope>
    <scope>DEVELOPMENTAL STAGE</scope>
</reference>
<reference key="6">
    <citation type="journal article" date="2017" name="Biochim. Biophys. Acta">
        <title>The actin binding cytoskeletal protein Moesin is involved in nuclear mRNA export.</title>
        <authorList>
            <person name="Kristo I."/>
            <person name="Bajusz C."/>
            <person name="Borsos B.N."/>
            <person name="Pankotai T."/>
            <person name="Dopie J."/>
            <person name="Jankovics F."/>
            <person name="Vartiainen M.K."/>
            <person name="Erdelyi M."/>
            <person name="Vilmos P."/>
        </authorList>
    </citation>
    <scope>FUNCTION</scope>
    <scope>INTERACTION WITH MOE</scope>
</reference>
<reference key="7">
    <citation type="journal article" date="2021" name="RNA Biol.">
        <title>PCID2, a subunit of the Drosophila TREX-2 nuclear export complex, is essential for both mRNA nuclear export and its subsequent cytoplasmic trafficking.</title>
        <authorList>
            <person name="Glukhova A.A."/>
            <person name="Kurshakova M.M."/>
            <person name="Nabirochkina E.N."/>
            <person name="Georgieva S.G."/>
            <person name="Kopytova D.V."/>
        </authorList>
    </citation>
    <scope>FUNCTION</scope>
    <scope>INTERACTION WITH NUDC</scope>
    <scope>SUBCELLULAR LOCATION</scope>
    <scope>UBIQUITINATION</scope>
</reference>
<accession>Q9VTL1</accession>
<name>PCID2_DROME</name>
<sequence length="395" mass="45180">MFGTVNNYLSGVLHAAQDLDGESLATYLSLRDVHVQNHNLYIAQPEKLVDRFLKPPLDEVVSAHLKVLYHLAQEPPGYMEAYTQQSAACGAVVRLLQQLKDENWCLPLMYRVCLDLRYLAQACEKHCQGFTPGHVLEKAADCIMACFRVCAADGRASEEDTKRLGMMNLVNQLFKIYFRINKLHLCKPLIRAIDNCIFKDSFPLPEQITYKYFVGRRAMFDSNYQAAVQYLSYAFSNCPDRFASNKRLILIYLVPVKMLLGYLPSKSLLQRYDLLLFLDLAMAMKAGNVNRFDEIVRDQELVLIRSGIYLLVEKLKFLVYRNLFKKVFVIRKSHQLDMGDFLSALHFVGLTDVSLDETHCIVANLIYDGKIKGYISHAHNKLVVSKQNPFPSVSL</sequence>
<dbReference type="EMBL" id="AE014296">
    <property type="protein sequence ID" value="AAF50037.2"/>
    <property type="molecule type" value="Genomic_DNA"/>
</dbReference>
<dbReference type="EMBL" id="AY058688">
    <property type="protein sequence ID" value="AAL13917.1"/>
    <property type="molecule type" value="mRNA"/>
</dbReference>
<dbReference type="RefSeq" id="NP_648486.1">
    <property type="nucleotide sequence ID" value="NM_140229.3"/>
</dbReference>
<dbReference type="SMR" id="Q9VTL1"/>
<dbReference type="BioGRID" id="64668">
    <property type="interactions" value="13"/>
</dbReference>
<dbReference type="ComplexPortal" id="CPX-2263">
    <property type="entry name" value="TREX-2 transcription-export complex"/>
</dbReference>
<dbReference type="FunCoup" id="Q9VTL1">
    <property type="interactions" value="2066"/>
</dbReference>
<dbReference type="IntAct" id="Q9VTL1">
    <property type="interactions" value="7"/>
</dbReference>
<dbReference type="STRING" id="7227.FBpp0075833"/>
<dbReference type="PaxDb" id="7227-FBpp0075833"/>
<dbReference type="DNASU" id="39306"/>
<dbReference type="EnsemblMetazoa" id="FBtr0076102">
    <property type="protein sequence ID" value="FBpp0075833"/>
    <property type="gene ID" value="FBgn0036184"/>
</dbReference>
<dbReference type="GeneID" id="39306"/>
<dbReference type="KEGG" id="dme:Dmel_CG7351"/>
<dbReference type="UCSC" id="CG7351-RA">
    <property type="organism name" value="d. melanogaster"/>
</dbReference>
<dbReference type="AGR" id="FB:FBgn0036184"/>
<dbReference type="CTD" id="55795"/>
<dbReference type="FlyBase" id="FBgn0036184">
    <property type="gene designation" value="PCID2"/>
</dbReference>
<dbReference type="VEuPathDB" id="VectorBase:FBgn0036184"/>
<dbReference type="eggNOG" id="KOG2688">
    <property type="taxonomic scope" value="Eukaryota"/>
</dbReference>
<dbReference type="GeneTree" id="ENSGT00390000001101"/>
<dbReference type="HOGENOM" id="CLU_031567_2_0_1"/>
<dbReference type="InParanoid" id="Q9VTL1"/>
<dbReference type="OMA" id="INRMFTL"/>
<dbReference type="OrthoDB" id="10252687at2759"/>
<dbReference type="PhylomeDB" id="Q9VTL1"/>
<dbReference type="BioGRID-ORCS" id="39306">
    <property type="hits" value="1 hit in 1 CRISPR screen"/>
</dbReference>
<dbReference type="GenomeRNAi" id="39306"/>
<dbReference type="PRO" id="PR:Q9VTL1"/>
<dbReference type="Proteomes" id="UP000000803">
    <property type="component" value="Chromosome 3L"/>
</dbReference>
<dbReference type="Bgee" id="FBgn0036184">
    <property type="expression patterns" value="Expressed in eye disc (Drosophila) and 50 other cell types or tissues"/>
</dbReference>
<dbReference type="GO" id="GO:0005737">
    <property type="term" value="C:cytoplasm"/>
    <property type="evidence" value="ECO:0000314"/>
    <property type="project" value="UniProtKB"/>
</dbReference>
<dbReference type="GO" id="GO:0005856">
    <property type="term" value="C:cytoskeleton"/>
    <property type="evidence" value="ECO:0007669"/>
    <property type="project" value="UniProtKB-SubCell"/>
</dbReference>
<dbReference type="GO" id="GO:0031965">
    <property type="term" value="C:nuclear membrane"/>
    <property type="evidence" value="ECO:0007669"/>
    <property type="project" value="UniProtKB-SubCell"/>
</dbReference>
<dbReference type="GO" id="GO:0005634">
    <property type="term" value="C:nucleus"/>
    <property type="evidence" value="ECO:0000314"/>
    <property type="project" value="UniProtKB"/>
</dbReference>
<dbReference type="GO" id="GO:0070390">
    <property type="term" value="C:transcription export complex 2"/>
    <property type="evidence" value="ECO:0000314"/>
    <property type="project" value="FlyBase"/>
</dbReference>
<dbReference type="GO" id="GO:0003690">
    <property type="term" value="F:double-stranded DNA binding"/>
    <property type="evidence" value="ECO:0000318"/>
    <property type="project" value="GO_Central"/>
</dbReference>
<dbReference type="GO" id="GO:0019904">
    <property type="term" value="F:protein domain specific binding"/>
    <property type="evidence" value="ECO:0000353"/>
    <property type="project" value="UniProtKB"/>
</dbReference>
<dbReference type="GO" id="GO:0003723">
    <property type="term" value="F:RNA binding"/>
    <property type="evidence" value="ECO:0000318"/>
    <property type="project" value="GO_Central"/>
</dbReference>
<dbReference type="GO" id="GO:0006406">
    <property type="term" value="P:mRNA export from nucleus"/>
    <property type="evidence" value="ECO:0000314"/>
    <property type="project" value="UniProtKB"/>
</dbReference>
<dbReference type="GO" id="GO:0016973">
    <property type="term" value="P:poly(A)+ mRNA export from nucleus"/>
    <property type="evidence" value="ECO:0000318"/>
    <property type="project" value="GO_Central"/>
</dbReference>
<dbReference type="GO" id="GO:0000973">
    <property type="term" value="P:post-transcriptional tethering of RNA polymerase II gene DNA at nuclear periphery"/>
    <property type="evidence" value="ECO:0000318"/>
    <property type="project" value="GO_Central"/>
</dbReference>
<dbReference type="GO" id="GO:0015031">
    <property type="term" value="P:protein transport"/>
    <property type="evidence" value="ECO:0007669"/>
    <property type="project" value="UniProtKB-KW"/>
</dbReference>
<dbReference type="GO" id="GO:0006417">
    <property type="term" value="P:regulation of translation"/>
    <property type="evidence" value="ECO:0007669"/>
    <property type="project" value="UniProtKB-KW"/>
</dbReference>
<dbReference type="GO" id="GO:0006368">
    <property type="term" value="P:transcription elongation by RNA polymerase II"/>
    <property type="evidence" value="ECO:0000318"/>
    <property type="project" value="GO_Central"/>
</dbReference>
<dbReference type="FunFam" id="1.10.10.10:FF:000146">
    <property type="entry name" value="PCI domain-containing protein 2 homolog"/>
    <property type="match status" value="1"/>
</dbReference>
<dbReference type="Gene3D" id="1.10.10.10">
    <property type="entry name" value="Winged helix-like DNA-binding domain superfamily/Winged helix DNA-binding domain"/>
    <property type="match status" value="1"/>
</dbReference>
<dbReference type="InterPro" id="IPR045114">
    <property type="entry name" value="Csn12-like"/>
</dbReference>
<dbReference type="InterPro" id="IPR000717">
    <property type="entry name" value="PCI_dom"/>
</dbReference>
<dbReference type="InterPro" id="IPR021184">
    <property type="entry name" value="TNF_CS"/>
</dbReference>
<dbReference type="InterPro" id="IPR036388">
    <property type="entry name" value="WH-like_DNA-bd_sf"/>
</dbReference>
<dbReference type="PANTHER" id="PTHR12732:SF0">
    <property type="entry name" value="PCI DOMAIN-CONTAINING PROTEIN 2"/>
    <property type="match status" value="1"/>
</dbReference>
<dbReference type="PANTHER" id="PTHR12732">
    <property type="entry name" value="UNCHARACTERIZED PROTEASOME COMPONENT REGION PCI-CONTAINING"/>
    <property type="match status" value="1"/>
</dbReference>
<dbReference type="Pfam" id="PF01399">
    <property type="entry name" value="PCI"/>
    <property type="match status" value="1"/>
</dbReference>
<dbReference type="SMART" id="SM00753">
    <property type="entry name" value="PAM"/>
    <property type="match status" value="1"/>
</dbReference>
<dbReference type="PROSITE" id="PS50250">
    <property type="entry name" value="PCI"/>
    <property type="match status" value="1"/>
</dbReference>
<comment type="function">
    <text evidence="2 3 4 5">Required for the export of nuclear mRNAs and involved in mRNA trafficking in the cytoplasm (PubMed:27016737, PubMed:28554770, PubMed:33602059). Component of the nuclear pore complex (NPC)-associated TREX-2/AMEX complex (anchoring and mRNA export complex) which functions in docking export-competent ribonucleoprotein particles (mRNPs) to the nuclear entrance of the nuclear pore complex (nuclear basket), thereby enabling the export of mRNAs to the cytoplasm through the nuclear pores (PubMed:27016737, PubMed:28554770, PubMed:33602059). Within the complex, specifically promotes the association of factors involved in regulating nuclear mRNA export, such as Moe, sbr/NXF1 and the ORC complex, to the mRNPs particles (PubMed:27016737, PubMed:28554770, PubMed:33602059). In the cytoplasm, functions independently of its role in the TREX-2/AMEX complex, to promote cytoplasmic mRNA trafficking together with nudC (PubMed:33602059). Associates with translationally active polysomes (PubMed:18086857).</text>
</comment>
<comment type="subunit">
    <text evidence="2 3 4 5">Component of the nuclear pore complex (NPC)-associated TREX-2/AMEX complex (anchoring and mRNA export complex), composed of e(y)2, xmas and PCID2 (PubMed:27016737). Interaction between the TREX-2/AMEX complex and the ORC complex is required for ORC localization to mRNPs, and consequently mRNA export (PubMed:27016737). Within the TREX-2/AMEX-ORC complex, interacts with Orc3 and Orc4 (PubMed:27016737). Interacts with sbr/NXF1 (PubMed:18086857). Interacts with Moe (PubMed:28554770). Interacts with nudC; required to maintain stability in the cytoplasm (PubMed:33602059).</text>
</comment>
<comment type="interaction">
    <interactant intactId="EBI-123918">
        <id>Q9VTL1</id>
    </interactant>
    <interactant intactId="EBI-3415603">
        <id>Q9VVA6</id>
        <label>nudC</label>
    </interactant>
    <organismsDiffer>false</organismsDiffer>
    <experiments>3</experiments>
</comment>
<comment type="interaction">
    <interactant intactId="EBI-123918">
        <id>Q9VTL1</id>
    </interactant>
    <interactant intactId="EBI-101834">
        <id>Q9VM46</id>
        <label>Sem1</label>
    </interactant>
    <organismsDiffer>false</organismsDiffer>
    <experiments>3</experiments>
</comment>
<comment type="subcellular location">
    <subcellularLocation>
        <location evidence="2 3">Nucleus</location>
    </subcellularLocation>
    <subcellularLocation>
        <location evidence="2 5">Cytoplasm</location>
    </subcellularLocation>
    <subcellularLocation>
        <location evidence="5">Nucleus membrane</location>
    </subcellularLocation>
    <subcellularLocation>
        <location evidence="5">Cytoplasm</location>
        <location evidence="5">Cytoskeleton</location>
    </subcellularLocation>
    <text evidence="2 5">Shuttles in and out of the nucleus by a emb/Crm1-dependent mechanism (PubMed:18086857). The ubiquitinated forms are localized to the cytoplasm, the nonubiquitinated forms are localized to the nucleus, and both forms are associated with the nuclear membrane (PubMed:33602059). Associated with cytoplasmic microtubules (PubMed:33602059). Associates with mRNA in the nucleus and cytoplasm (PubMed:33602059).</text>
</comment>
<comment type="developmental stage">
    <text evidence="3">Expressed in embryos (at protein level).</text>
</comment>
<comment type="domain">
    <text evidence="2">PCI domain is required for interaction with polysomes but not the interaction with sbr.</text>
</comment>
<comment type="PTM">
    <text evidence="5">Mono- and poly-ubiquitinated.</text>
</comment>
<comment type="similarity">
    <text evidence="7">Belongs to the CSN12 family.</text>
</comment>